<reference key="1">
    <citation type="submission" date="2005-08" db="EMBL/GenBank/DDBJ databases">
        <title>Complete sequence of Chlorobium chlorochromatii CaD3.</title>
        <authorList>
            <consortium name="US DOE Joint Genome Institute"/>
            <person name="Copeland A."/>
            <person name="Lucas S."/>
            <person name="Lapidus A."/>
            <person name="Barry K."/>
            <person name="Detter J.C."/>
            <person name="Glavina T."/>
            <person name="Hammon N."/>
            <person name="Israni S."/>
            <person name="Pitluck S."/>
            <person name="Bryant D."/>
            <person name="Schmutz J."/>
            <person name="Larimer F."/>
            <person name="Land M."/>
            <person name="Kyrpides N."/>
            <person name="Ivanova N."/>
            <person name="Richardson P."/>
        </authorList>
    </citation>
    <scope>NUCLEOTIDE SEQUENCE [LARGE SCALE GENOMIC DNA]</scope>
    <source>
        <strain>CaD3</strain>
    </source>
</reference>
<accession>Q3APL6</accession>
<comment type="function">
    <text evidence="1">Synthesizes alpha-1,4-glucan chains using ADP-glucose.</text>
</comment>
<comment type="catalytic activity">
    <reaction evidence="1">
        <text>[(1-&gt;4)-alpha-D-glucosyl](n) + ADP-alpha-D-glucose = [(1-&gt;4)-alpha-D-glucosyl](n+1) + ADP + H(+)</text>
        <dbReference type="Rhea" id="RHEA:18189"/>
        <dbReference type="Rhea" id="RHEA-COMP:9584"/>
        <dbReference type="Rhea" id="RHEA-COMP:9587"/>
        <dbReference type="ChEBI" id="CHEBI:15378"/>
        <dbReference type="ChEBI" id="CHEBI:15444"/>
        <dbReference type="ChEBI" id="CHEBI:57498"/>
        <dbReference type="ChEBI" id="CHEBI:456216"/>
        <dbReference type="EC" id="2.4.1.21"/>
    </reaction>
</comment>
<comment type="pathway">
    <text evidence="1">Glycan biosynthesis; glycogen biosynthesis.</text>
</comment>
<comment type="similarity">
    <text evidence="1">Belongs to the glycosyltransferase 1 family. Bacterial/plant glycogen synthase subfamily.</text>
</comment>
<dbReference type="EC" id="2.4.1.21" evidence="1"/>
<dbReference type="EMBL" id="CP000108">
    <property type="protein sequence ID" value="ABB29059.1"/>
    <property type="molecule type" value="Genomic_DNA"/>
</dbReference>
<dbReference type="SMR" id="Q3APL6"/>
<dbReference type="STRING" id="340177.Cag_1808"/>
<dbReference type="CAZy" id="GT5">
    <property type="family name" value="Glycosyltransferase Family 5"/>
</dbReference>
<dbReference type="KEGG" id="cch:Cag_1808"/>
<dbReference type="eggNOG" id="COG0297">
    <property type="taxonomic scope" value="Bacteria"/>
</dbReference>
<dbReference type="HOGENOM" id="CLU_009583_18_0_10"/>
<dbReference type="OrthoDB" id="9808590at2"/>
<dbReference type="UniPathway" id="UPA00164"/>
<dbReference type="GO" id="GO:0009011">
    <property type="term" value="F:alpha-1,4-glucan glucosyltransferase (ADP-glucose donor) activity"/>
    <property type="evidence" value="ECO:0007669"/>
    <property type="project" value="UniProtKB-UniRule"/>
</dbReference>
<dbReference type="GO" id="GO:0004373">
    <property type="term" value="F:alpha-1,4-glucan glucosyltransferase (UDP-glucose donor) activity"/>
    <property type="evidence" value="ECO:0007669"/>
    <property type="project" value="InterPro"/>
</dbReference>
<dbReference type="GO" id="GO:0005978">
    <property type="term" value="P:glycogen biosynthetic process"/>
    <property type="evidence" value="ECO:0007669"/>
    <property type="project" value="UniProtKB-UniRule"/>
</dbReference>
<dbReference type="CDD" id="cd03791">
    <property type="entry name" value="GT5_Glycogen_synthase_DULL1-like"/>
    <property type="match status" value="1"/>
</dbReference>
<dbReference type="Gene3D" id="3.40.50.2000">
    <property type="entry name" value="Glycogen Phosphorylase B"/>
    <property type="match status" value="2"/>
</dbReference>
<dbReference type="HAMAP" id="MF_00484">
    <property type="entry name" value="Glycogen_synth"/>
    <property type="match status" value="1"/>
</dbReference>
<dbReference type="InterPro" id="IPR001296">
    <property type="entry name" value="Glyco_trans_1"/>
</dbReference>
<dbReference type="InterPro" id="IPR011835">
    <property type="entry name" value="GS/SS"/>
</dbReference>
<dbReference type="InterPro" id="IPR013534">
    <property type="entry name" value="Starch_synth_cat_dom"/>
</dbReference>
<dbReference type="NCBIfam" id="TIGR02095">
    <property type="entry name" value="glgA"/>
    <property type="match status" value="1"/>
</dbReference>
<dbReference type="NCBIfam" id="NF010698">
    <property type="entry name" value="PRK14098.1"/>
    <property type="match status" value="1"/>
</dbReference>
<dbReference type="PANTHER" id="PTHR45825:SF11">
    <property type="entry name" value="ALPHA AMYLASE DOMAIN-CONTAINING PROTEIN"/>
    <property type="match status" value="1"/>
</dbReference>
<dbReference type="PANTHER" id="PTHR45825">
    <property type="entry name" value="GRANULE-BOUND STARCH SYNTHASE 1, CHLOROPLASTIC/AMYLOPLASTIC"/>
    <property type="match status" value="1"/>
</dbReference>
<dbReference type="Pfam" id="PF08323">
    <property type="entry name" value="Glyco_transf_5"/>
    <property type="match status" value="1"/>
</dbReference>
<dbReference type="Pfam" id="PF00534">
    <property type="entry name" value="Glycos_transf_1"/>
    <property type="match status" value="1"/>
</dbReference>
<dbReference type="SUPFAM" id="SSF53756">
    <property type="entry name" value="UDP-Glycosyltransferase/glycogen phosphorylase"/>
    <property type="match status" value="1"/>
</dbReference>
<gene>
    <name evidence="1" type="primary">glgA</name>
    <name type="ordered locus">Cag_1808</name>
</gene>
<feature type="chain" id="PRO_0000230238" description="Glycogen synthase">
    <location>
        <begin position="1"/>
        <end position="489"/>
    </location>
</feature>
<feature type="binding site" evidence="1">
    <location>
        <position position="20"/>
    </location>
    <ligand>
        <name>ADP-alpha-D-glucose</name>
        <dbReference type="ChEBI" id="CHEBI:57498"/>
    </ligand>
</feature>
<name>GLGA_CHLCH</name>
<protein>
    <recommendedName>
        <fullName evidence="1">Glycogen synthase</fullName>
        <ecNumber evidence="1">2.4.1.21</ecNumber>
    </recommendedName>
    <alternativeName>
        <fullName evidence="1">Starch [bacterial glycogen] synthase</fullName>
    </alternativeName>
</protein>
<proteinExistence type="inferred from homology"/>
<organism>
    <name type="scientific">Chlorobium chlorochromatii (strain CaD3)</name>
    <dbReference type="NCBI Taxonomy" id="340177"/>
    <lineage>
        <taxon>Bacteria</taxon>
        <taxon>Pseudomonadati</taxon>
        <taxon>Chlorobiota</taxon>
        <taxon>Chlorobiia</taxon>
        <taxon>Chlorobiales</taxon>
        <taxon>Chlorobiaceae</taxon>
        <taxon>Chlorobium/Pelodictyon group</taxon>
        <taxon>Chlorobium</taxon>
    </lineage>
</organism>
<keyword id="KW-0320">Glycogen biosynthesis</keyword>
<keyword id="KW-0328">Glycosyltransferase</keyword>
<keyword id="KW-0808">Transferase</keyword>
<evidence type="ECO:0000255" key="1">
    <source>
        <dbReference type="HAMAP-Rule" id="MF_00484"/>
    </source>
</evidence>
<sequence length="489" mass="55626">MSRRNSKVLYVSGEVAPFVRITALADFMASFPQTVEDEGFEARIMMPKYGIINDRKFRLHDVLRLSDIEVHLKDKVDMLDVKVTALPSSKIQTYFLYNEKYFKRHAWFPDLSTGNDARVTVEKIVFFNVGVLETLLRLGWKPDIIHCNDWHTALIPLLLKTMYASHEFFRNVKTLFSIHNAYRQGNFPLKHFQRLLPDEVCAGLHCVKDEVNLLFTGIDHVELLTTTSPRYAECLRGDTPEAFGVGKRLLERELPLHGMVNGLDARQWNPAIDKMIKKRYSTENMNGKVENRKMLLEEMKLPWRDGMPLVGFIATFDDYQGAKLLADSLEKLIAQDIQLVIIGFGDKKCEQRFQEFVVAHPEQVSVQAECSDSFLHLAIAGLDLLLMPSKVESCGMLQMSAMTYGTIPIARATGGIVETIQDHGENLGTGFLFDDYSVEGLSGRLADALRCFHDDECWPALVERAMSSDFSWHNTAEAYGQLYRNLLGK</sequence>